<accession>Q11183</accession>
<reference key="1">
    <citation type="journal article" date="1998" name="Science">
        <title>Genome sequence of the nematode C. elegans: a platform for investigating biology.</title>
        <authorList>
            <consortium name="The C. elegans sequencing consortium"/>
        </authorList>
    </citation>
    <scope>NUCLEOTIDE SEQUENCE [LARGE SCALE GENOMIC DNA]</scope>
    <source>
        <strain>Bristol N2</strain>
    </source>
</reference>
<reference key="2">
    <citation type="journal article" date="2004" name="Genes Cells">
        <title>An evolutionarily conserved gene required for proper microtubule architecture in Caenorhabditis elegans.</title>
        <authorList>
            <person name="Ogawa S."/>
            <person name="Matsubayashi Y."/>
            <person name="Nishida E."/>
        </authorList>
    </citation>
    <scope>FUNCTION</scope>
    <scope>SUBCELLULAR LOCATION</scope>
    <scope>TISSUE SPECIFICITY</scope>
    <scope>DEVELOPMENTAL STAGE</scope>
    <scope>DISRUPTION PHENOTYPE</scope>
</reference>
<reference key="3">
    <citation type="journal article" date="2015" name="G3 (Bethesda)">
        <title>Identification of nonviable genes affecting touch sensitivity in Caenorhabditis elegans using neuronally enhanced feeding RNA interference.</title>
        <authorList>
            <person name="Chen X."/>
            <person name="Cuadros M.D."/>
            <person name="Chalfie M."/>
        </authorList>
    </citation>
    <scope>FUNCTION</scope>
    <scope>TISSUE SPECIFICITY</scope>
</reference>
<dbReference type="EMBL" id="FO080365">
    <property type="protein sequence ID" value="CCD63192.1"/>
    <property type="molecule type" value="Genomic_DNA"/>
</dbReference>
<dbReference type="PIR" id="G88482">
    <property type="entry name" value="G88482"/>
</dbReference>
<dbReference type="RefSeq" id="NP_498410.1">
    <property type="nucleotide sequence ID" value="NM_066009.5"/>
</dbReference>
<dbReference type="SMR" id="Q11183"/>
<dbReference type="BioGRID" id="47115">
    <property type="interactions" value="2"/>
</dbReference>
<dbReference type="FunCoup" id="Q11183">
    <property type="interactions" value="3327"/>
</dbReference>
<dbReference type="IntAct" id="Q11183">
    <property type="interactions" value="1"/>
</dbReference>
<dbReference type="STRING" id="6239.C05D11.3.1"/>
<dbReference type="PaxDb" id="6239-C05D11.3"/>
<dbReference type="PeptideAtlas" id="Q11183"/>
<dbReference type="EnsemblMetazoa" id="C05D11.3.1">
    <property type="protein sequence ID" value="C05D11.3.1"/>
    <property type="gene ID" value="WBGene00006515"/>
</dbReference>
<dbReference type="GeneID" id="182257"/>
<dbReference type="KEGG" id="cel:CELE_C05D11.3"/>
<dbReference type="UCSC" id="C05D11.3">
    <property type="organism name" value="c. elegans"/>
</dbReference>
<dbReference type="AGR" id="WB:WBGene00006515"/>
<dbReference type="CTD" id="182257"/>
<dbReference type="WormBase" id="C05D11.3">
    <property type="protein sequence ID" value="CE01133"/>
    <property type="gene ID" value="WBGene00006515"/>
    <property type="gene designation" value="txdc-9"/>
</dbReference>
<dbReference type="eggNOG" id="KOG1672">
    <property type="taxonomic scope" value="Eukaryota"/>
</dbReference>
<dbReference type="GeneTree" id="ENSGT00390000015645"/>
<dbReference type="HOGENOM" id="CLU_072378_2_0_1"/>
<dbReference type="InParanoid" id="Q11183"/>
<dbReference type="OMA" id="IDQEMNK"/>
<dbReference type="OrthoDB" id="10257948at2759"/>
<dbReference type="PhylomeDB" id="Q11183"/>
<dbReference type="PRO" id="PR:Q11183"/>
<dbReference type="Proteomes" id="UP000001940">
    <property type="component" value="Chromosome III"/>
</dbReference>
<dbReference type="Bgee" id="WBGene00006515">
    <property type="expression patterns" value="Expressed in embryo and 11 other cell types or tissues"/>
</dbReference>
<dbReference type="GO" id="GO:0005737">
    <property type="term" value="C:cytoplasm"/>
    <property type="evidence" value="ECO:0000314"/>
    <property type="project" value="WormBase"/>
</dbReference>
<dbReference type="GO" id="GO:0005634">
    <property type="term" value="C:nucleus"/>
    <property type="evidence" value="ECO:0000314"/>
    <property type="project" value="WormBase"/>
</dbReference>
<dbReference type="GO" id="GO:0000226">
    <property type="term" value="P:microtubule cytoskeleton organization"/>
    <property type="evidence" value="ECO:0000315"/>
    <property type="project" value="WormBase"/>
</dbReference>
<dbReference type="CDD" id="cd02989">
    <property type="entry name" value="Phd_like_TxnDC9"/>
    <property type="match status" value="1"/>
</dbReference>
<dbReference type="Gene3D" id="3.40.30.10">
    <property type="entry name" value="Glutaredoxin"/>
    <property type="match status" value="1"/>
</dbReference>
<dbReference type="InterPro" id="IPR036249">
    <property type="entry name" value="Thioredoxin-like_sf"/>
</dbReference>
<dbReference type="InterPro" id="IPR013766">
    <property type="entry name" value="Thioredoxin_domain"/>
</dbReference>
<dbReference type="PANTHER" id="PTHR21148">
    <property type="entry name" value="THIOREDOXIN DOMAIN-CONTAINING PROTEIN 9"/>
    <property type="match status" value="1"/>
</dbReference>
<dbReference type="Pfam" id="PF00085">
    <property type="entry name" value="Thioredoxin"/>
    <property type="match status" value="1"/>
</dbReference>
<dbReference type="SUPFAM" id="SSF52833">
    <property type="entry name" value="Thioredoxin-like"/>
    <property type="match status" value="1"/>
</dbReference>
<comment type="function">
    <text evidence="1 2">Required for normal microtubule organization and function (PubMed:15009089, PubMed:25575561). Regulates tubulin acetylation in ALM and PLM neurons (PubMed:25575561).</text>
</comment>
<comment type="subcellular location">
    <subcellularLocation>
        <location evidence="1">Nucleus</location>
    </subcellularLocation>
    <subcellularLocation>
        <location evidence="1">Cytoplasm</location>
    </subcellularLocation>
</comment>
<comment type="tissue specificity">
    <text evidence="1 2">Expressed throughout the body with high expression in the nervous system, including the ventral nerve cord and tail neurons, and vulva.</text>
</comment>
<comment type="developmental stage">
    <text evidence="1">Expressed from late embryogenesis onwards but mainly expressed at young adult and adult stages.</text>
</comment>
<comment type="disruption phenotype">
    <text evidence="1">RNAi-mediated knockdown results in 60% embryonic lethality. Surviving 2-cell stage to 64-cell stage embryos display a disorganized arrangement and do not undergo cell divion. Due to short and diorganized microtubule arrangement, one cell stage embryos exhibit nuclear-centrosomal defects, failed cytokinesis, and abnormal pronuclear activity which include failed male pronucleus migration and the presence of multiple pronuclei.</text>
</comment>
<organism>
    <name type="scientific">Caenorhabditis elegans</name>
    <dbReference type="NCBI Taxonomy" id="6239"/>
    <lineage>
        <taxon>Eukaryota</taxon>
        <taxon>Metazoa</taxon>
        <taxon>Ecdysozoa</taxon>
        <taxon>Nematoda</taxon>
        <taxon>Chromadorea</taxon>
        <taxon>Rhabditida</taxon>
        <taxon>Rhabditina</taxon>
        <taxon>Rhabditomorpha</taxon>
        <taxon>Rhabditoidea</taxon>
        <taxon>Rhabditidae</taxon>
        <taxon>Peloderinae</taxon>
        <taxon>Caenorhabditis</taxon>
    </lineage>
</organism>
<name>TXND9_CAEEL</name>
<gene>
    <name evidence="4" type="primary">txdc-9</name>
    <name evidence="4" type="synonym">tag-170</name>
    <name evidence="4" type="ORF">C05D11.3</name>
</gene>
<protein>
    <recommendedName>
        <fullName evidence="4">Thioredoxin domain-containing protein 9</fullName>
    </recommendedName>
</protein>
<feature type="chain" id="PRO_0000120170" description="Thioredoxin domain-containing protein 9" evidence="3">
    <location>
        <begin position="1"/>
        <end position="208"/>
    </location>
</feature>
<feature type="domain" description="Thioredoxin">
    <location>
        <begin position="68"/>
        <end position="179"/>
    </location>
</feature>
<evidence type="ECO:0000269" key="1">
    <source>
    </source>
</evidence>
<evidence type="ECO:0000269" key="2">
    <source>
    </source>
</evidence>
<evidence type="ECO:0000305" key="3"/>
<evidence type="ECO:0000312" key="4">
    <source>
        <dbReference type="WormBase" id="C05D11.3"/>
    </source>
</evidence>
<proteinExistence type="evidence at transcript level"/>
<sequence length="208" mass="24379">MAANIQQQFGEQLLRAAQVVEEQIDQEMNKLENLEEDDLEVIRRQRMEQMKKAQKDRIEMLSHGHGKYEEVADEKEFFEATKKSDKVVCLFYLPGNFRCKIVDKHFEILARKHVGTRFIHVNAEKVHFLTTRLNIRVIPSIAIVVKQQTVDYIRGFDELGGKDEFTTETMENRLARSEVLTVEKKHTAPAKKKIIRSGVEEYDNEEDW</sequence>
<keyword id="KW-0963">Cytoplasm</keyword>
<keyword id="KW-0539">Nucleus</keyword>
<keyword id="KW-1185">Reference proteome</keyword>